<evidence type="ECO:0000255" key="1"/>
<evidence type="ECO:0000256" key="2">
    <source>
        <dbReference type="SAM" id="MobiDB-lite"/>
    </source>
</evidence>
<evidence type="ECO:0000269" key="3">
    <source>
    </source>
</evidence>
<evidence type="ECO:0000269" key="4">
    <source>
    </source>
</evidence>
<evidence type="ECO:0000269" key="5">
    <source>
    </source>
</evidence>
<evidence type="ECO:0000269" key="6">
    <source>
    </source>
</evidence>
<evidence type="ECO:0000269" key="7">
    <source>
    </source>
</evidence>
<evidence type="ECO:0000305" key="8"/>
<evidence type="ECO:0000305" key="9">
    <source>
    </source>
</evidence>
<evidence type="ECO:0000312" key="10">
    <source>
        <dbReference type="EMBL" id="AAC08944.1"/>
    </source>
</evidence>
<evidence type="ECO:0000312" key="11">
    <source>
        <dbReference type="Proteomes" id="UP000001940"/>
    </source>
</evidence>
<evidence type="ECO:0000312" key="12">
    <source>
        <dbReference type="WormBase" id="F49E10.3"/>
    </source>
</evidence>
<gene>
    <name evidence="12" type="primary">flp-7</name>
    <name evidence="12" type="ORF">F49E10.3</name>
</gene>
<accession>G5EEC2</accession>
<comment type="function">
    <text evidence="3 5 6">FMRFamide-like neuropeptides (PubMed:16377032, PubMed:28128367). Stimulates serotonin-induced fat loss by binding to and activating the npr-22 receptor which leads to induction of the atgl-1 lipase and subsequent fat loss (PubMed:33078707). Together with atfs-1, negatively regulates the expression of the transcription regulator hlh-11, to promote expression of atgl-1, and thus atgl-1-dependent fat oxidation in response to mitochondrial stress (PubMed:33078707).</text>
</comment>
<comment type="function">
    <text evidence="3">TPMQRSSMVRF-amide: Acts as a ligand for the npr-22 receptor in vitro.</text>
</comment>
<comment type="function">
    <text evidence="3">SPMQRSSMVRF-amide: Acts as a ligand for the npr-22 receptor in vitro.</text>
</comment>
<comment type="function">
    <molecule>SPMERSAMVRF-amide</molecule>
    <text evidence="3">Acts as a ligand for the npr-22 receptor in vitro.</text>
</comment>
<comment type="function">
    <molecule>SPMDRSKMVRF-amide</molecule>
    <text evidence="3">Acts as a ligand for the npr-22 receptor in vitro.</text>
</comment>
<comment type="subcellular location">
    <subcellularLocation>
        <location evidence="5">Secreted</location>
    </subcellularLocation>
    <text evidence="5">Secreted from the ASI sensory neurons in response to serotonin or octopamine.</text>
</comment>
<comment type="tissue specificity">
    <text evidence="5">Expressed in the ASI sensory neurons, the ALA interneuron and the AVG interneuron from where secretion occurs. Expression in the ASI neurons is necessary and sufficient to maintain serotonin-induced fat loss.</text>
</comment>
<comment type="developmental stage">
    <text evidence="4 7">Expressed in eggs, all larval stages and in adult (PubMed:9685599). Expressed in the ALA neuron in L4 stage larvae (PubMed:27546573).</text>
</comment>
<comment type="disruption phenotype">
    <text evidence="5">Retention of a significantly greater proportion of body fat compared to wild-type following treatment with serotonin, almost complete suppression of the transcriptional induction of the atgl-1 lipase, reduced egg-laying and suppression of octopamine-induced fat loss. No effect on serotonin-induced food intake, reproduction or the enhanced slowing response which is a satiety-like locomotor response to food availability.</text>
</comment>
<comment type="similarity">
    <text evidence="8">Belongs to the FARP (FMRFamide related peptide) family.</text>
</comment>
<name>FLP7_CAEEL</name>
<protein>
    <recommendedName>
        <fullName evidence="8">FMRFamide-like neuropeptides 7</fullName>
    </recommendedName>
    <component>
        <recommendedName>
            <fullName evidence="9">TPMQRSSMVRF-amide 1</fullName>
        </recommendedName>
    </component>
    <component>
        <recommendedName>
            <fullName evidence="9">SPMQRSSMVRF-amide 1</fullName>
        </recommendedName>
    </component>
    <component>
        <recommendedName>
            <fullName evidence="9">SPMQRSSMVRF-amide 2</fullName>
        </recommendedName>
    </component>
    <component>
        <recommendedName>
            <fullName evidence="9">SPMQRSSMVRF-amide 3</fullName>
        </recommendedName>
    </component>
    <component>
        <recommendedName>
            <fullName evidence="9">SPMERSAMVRF-amide</fullName>
        </recommendedName>
    </component>
    <component>
        <recommendedName>
            <fullName evidence="9">SPMDRSKMVRF-amide</fullName>
        </recommendedName>
    </component>
    <component>
        <recommendedName>
            <fullName evidence="9">SSIDRASMVRL-amide</fullName>
        </recommendedName>
    </component>
    <component>
        <recommendedName>
            <fullName evidence="9">TPMQRSSMVRF-amide 2</fullName>
        </recommendedName>
    </component>
</protein>
<dbReference type="EMBL" id="AF042393">
    <property type="protein sequence ID" value="AAC08944.1"/>
    <property type="molecule type" value="mRNA"/>
</dbReference>
<dbReference type="EMBL" id="BX284606">
    <property type="protein sequence ID" value="CCD71566.1"/>
    <property type="molecule type" value="Genomic_DNA"/>
</dbReference>
<dbReference type="PIR" id="T34292">
    <property type="entry name" value="T34292"/>
</dbReference>
<dbReference type="RefSeq" id="NP_508985.1">
    <property type="nucleotide sequence ID" value="NM_076584.6"/>
</dbReference>
<dbReference type="FunCoup" id="G5EEC2">
    <property type="interactions" value="129"/>
</dbReference>
<dbReference type="IntAct" id="G5EEC2">
    <property type="interactions" value="2"/>
</dbReference>
<dbReference type="STRING" id="6239.F49E10.3.1"/>
<dbReference type="PaxDb" id="6239-F49E10.3"/>
<dbReference type="EnsemblMetazoa" id="F49E10.3.1">
    <property type="protein sequence ID" value="F49E10.3.1"/>
    <property type="gene ID" value="WBGene00001450"/>
</dbReference>
<dbReference type="GeneID" id="180854"/>
<dbReference type="KEGG" id="cel:CELE_F49E10.3"/>
<dbReference type="AGR" id="WB:WBGene00001450"/>
<dbReference type="CTD" id="180854"/>
<dbReference type="WormBase" id="F49E10.3">
    <property type="protein sequence ID" value="CE07264"/>
    <property type="gene ID" value="WBGene00001450"/>
    <property type="gene designation" value="flp-7"/>
</dbReference>
<dbReference type="eggNOG" id="ENOG502SVJ1">
    <property type="taxonomic scope" value="Eukaryota"/>
</dbReference>
<dbReference type="HOGENOM" id="CLU_1519225_0_0_1"/>
<dbReference type="InParanoid" id="G5EEC2"/>
<dbReference type="OMA" id="PMERSAM"/>
<dbReference type="OrthoDB" id="5821485at2759"/>
<dbReference type="PhylomeDB" id="G5EEC2"/>
<dbReference type="PRO" id="PR:G5EEC2"/>
<dbReference type="Proteomes" id="UP000001940">
    <property type="component" value="Chromosome X"/>
</dbReference>
<dbReference type="Bgee" id="WBGene00001450">
    <property type="expression patterns" value="Expressed in larva and 3 other cell types or tissues"/>
</dbReference>
<dbReference type="GO" id="GO:0005615">
    <property type="term" value="C:extracellular space"/>
    <property type="evidence" value="ECO:0000314"/>
    <property type="project" value="UniProtKB"/>
</dbReference>
<dbReference type="GO" id="GO:0071855">
    <property type="term" value="F:neuropeptide receptor binding"/>
    <property type="evidence" value="ECO:0000314"/>
    <property type="project" value="WormBase"/>
</dbReference>
<dbReference type="GO" id="GO:0040013">
    <property type="term" value="P:negative regulation of locomotion"/>
    <property type="evidence" value="ECO:0000314"/>
    <property type="project" value="WormBase"/>
</dbReference>
<dbReference type="GO" id="GO:0007218">
    <property type="term" value="P:neuropeptide signaling pathway"/>
    <property type="evidence" value="ECO:0000314"/>
    <property type="project" value="WormBase"/>
</dbReference>
<dbReference type="InterPro" id="IPR002544">
    <property type="entry name" value="FMRFamid-related_peptide-like"/>
</dbReference>
<dbReference type="InterPro" id="IPR051041">
    <property type="entry name" value="FMRFamide-related_np"/>
</dbReference>
<dbReference type="PANTHER" id="PTHR20986:SF16">
    <property type="entry name" value="FMRFAMIDE-LIKE NEUROPEPTIDES 7"/>
    <property type="match status" value="1"/>
</dbReference>
<dbReference type="PANTHER" id="PTHR20986">
    <property type="entry name" value="FMRFAMIDE-RELATED PEPTIDES"/>
    <property type="match status" value="1"/>
</dbReference>
<dbReference type="Pfam" id="PF01581">
    <property type="entry name" value="FARP"/>
    <property type="match status" value="6"/>
</dbReference>
<sequence length="177" mass="20513">MLGSRFLLLALGLLVLVLAEESAEQQVQEPTELEKSGEQLSEEDLIDEQKRTPMQRSSMVRFGRSPMQRSSMVRFGKRSPMQRSSMVRFGKRSPMQRSSMVRFGKRSPMERSAMVRFGRSPMDRSKMVRFGRSSIDRASMVRLGKRTPMQRSSMVRFGKRSMEFEMQSNEKNIEDSE</sequence>
<organism evidence="11">
    <name type="scientific">Caenorhabditis elegans</name>
    <dbReference type="NCBI Taxonomy" id="6239"/>
    <lineage>
        <taxon>Eukaryota</taxon>
        <taxon>Metazoa</taxon>
        <taxon>Ecdysozoa</taxon>
        <taxon>Nematoda</taxon>
        <taxon>Chromadorea</taxon>
        <taxon>Rhabditida</taxon>
        <taxon>Rhabditina</taxon>
        <taxon>Rhabditomorpha</taxon>
        <taxon>Rhabditoidea</taxon>
        <taxon>Rhabditidae</taxon>
        <taxon>Peloderinae</taxon>
        <taxon>Caenorhabditis</taxon>
    </lineage>
</organism>
<keyword id="KW-0027">Amidation</keyword>
<keyword id="KW-0165">Cleavage on pair of basic residues</keyword>
<keyword id="KW-0527">Neuropeptide</keyword>
<keyword id="KW-1185">Reference proteome</keyword>
<keyword id="KW-0677">Repeat</keyword>
<keyword id="KW-0964">Secreted</keyword>
<keyword id="KW-0732">Signal</keyword>
<proteinExistence type="evidence at protein level"/>
<reference evidence="10" key="1">
    <citation type="journal article" date="1998" name="Brain Res. Mol. Brain Res.">
        <title>FMRFamide-related gene family in the nematode, Caenorhabditis elegans.</title>
        <authorList>
            <person name="Nelson L.S."/>
            <person name="Kim K."/>
            <person name="Memmott J.E."/>
            <person name="Li C."/>
        </authorList>
    </citation>
    <scope>NUCLEOTIDE SEQUENCE [MRNA]</scope>
    <scope>DEVELOPMENTAL STAGE</scope>
    <source>
        <strain evidence="10">Bristol N2</strain>
    </source>
</reference>
<reference evidence="11" key="2">
    <citation type="journal article" date="1998" name="Science">
        <title>Genome sequence of the nematode C. elegans: a platform for investigating biology.</title>
        <authorList>
            <consortium name="The C. elegans sequencing consortium"/>
        </authorList>
    </citation>
    <scope>NUCLEOTIDE SEQUENCE [LARGE SCALE GENOMIC DNA]</scope>
    <source>
        <strain evidence="11">Bristol N2</strain>
    </source>
</reference>
<reference evidence="8" key="3">
    <citation type="journal article" date="2006" name="Peptides">
        <title>FMRFamide related peptide ligands activate the Caenorhabditis elegans orphan GPCR Y59H11AL.1.</title>
        <authorList>
            <person name="Mertens I."/>
            <person name="Clinckspoor I."/>
            <person name="Janssen T."/>
            <person name="Nachman R."/>
            <person name="Schoofs L."/>
        </authorList>
    </citation>
    <scope>FUNCTION</scope>
    <scope>AMIDATION AT PHE-62; PHE-75; PHE-89; PHE-103; PHE-117; PHE-130; LEU-143 AND PHE-157</scope>
</reference>
<reference evidence="8" key="4">
    <citation type="journal article" date="2016" name="Curr. Biol.">
        <title>C. elegans Stress-Induced Sleep Emerges from the Collective Action of Multiple Neuropeptides.</title>
        <authorList>
            <person name="Nath R.D."/>
            <person name="Chow E.S."/>
            <person name="Wang H."/>
            <person name="Schwarz E.M."/>
            <person name="Sternberg P.W."/>
        </authorList>
    </citation>
    <scope>DEVELOPMENTAL STAGE</scope>
</reference>
<reference evidence="8" key="5">
    <citation type="journal article" date="2017" name="Nat. Commun.">
        <title>A tachykinin-like neuroendocrine signalling axis couples central serotonin action and nutrient sensing with peripheral lipid metabolism.</title>
        <authorList>
            <person name="Palamiuc L."/>
            <person name="Noble T."/>
            <person name="Witham E."/>
            <person name="Ratanpal H."/>
            <person name="Vaughan M."/>
            <person name="Srinivasan S."/>
        </authorList>
    </citation>
    <scope>FUNCTION</scope>
    <scope>SUBCELLULAR LOCATION</scope>
    <scope>TISSUE SPECIFICITY</scope>
    <scope>DISRUPTION PHENOTYPE</scope>
</reference>
<reference key="6">
    <citation type="journal article" date="2020" name="Elife">
        <title>A feedback loop governs the relationship between lipid metabolism and longevity.</title>
        <authorList>
            <person name="Littlejohn N.K."/>
            <person name="Seban N."/>
            <person name="Liu C.C."/>
            <person name="Srinivasan S."/>
        </authorList>
    </citation>
    <scope>FUNCTION</scope>
</reference>
<feature type="signal peptide" evidence="1">
    <location>
        <begin position="1"/>
        <end position="19"/>
    </location>
</feature>
<feature type="propeptide" id="PRO_0000442500" evidence="8">
    <location>
        <begin position="20"/>
        <end position="49"/>
    </location>
</feature>
<feature type="peptide" id="PRO_0000442501" description="TPMQRSSMVRF-amide 1" evidence="9">
    <location>
        <begin position="52"/>
        <end position="62"/>
    </location>
</feature>
<feature type="peptide" id="PRO_0000442502" description="SPMQRSSMVRF-amide 1" evidence="9">
    <location>
        <begin position="65"/>
        <end position="75"/>
    </location>
</feature>
<feature type="peptide" id="PRO_0000442503" description="SPMQRSSMVRF-amide 2" evidence="9">
    <location>
        <begin position="79"/>
        <end position="89"/>
    </location>
</feature>
<feature type="peptide" id="PRO_0000442504" description="SPMQRSSMVRF-amide 3" evidence="9">
    <location>
        <begin position="93"/>
        <end position="103"/>
    </location>
</feature>
<feature type="peptide" id="PRO_0000442505" description="SPMERSAMVRF-amide" evidence="9">
    <location>
        <begin position="107"/>
        <end position="117"/>
    </location>
</feature>
<feature type="peptide" id="PRO_0000442506" description="SPMDRSKMVRF-amide" evidence="9">
    <location>
        <begin position="120"/>
        <end position="130"/>
    </location>
</feature>
<feature type="peptide" id="PRO_0000442507" description="SSIDRASMVRL-amide" evidence="9">
    <location>
        <begin position="133"/>
        <end position="143"/>
    </location>
</feature>
<feature type="peptide" id="PRO_0000442508" description="TPMQRSSMVRF-amide 2" evidence="9">
    <location>
        <begin position="147"/>
        <end position="157"/>
    </location>
</feature>
<feature type="propeptide" id="PRO_0000442509" evidence="8">
    <location>
        <begin position="161"/>
        <end position="177"/>
    </location>
</feature>
<feature type="region of interest" description="Disordered" evidence="2">
    <location>
        <begin position="25"/>
        <end position="106"/>
    </location>
</feature>
<feature type="modified residue" description="Phenylalanine amide" evidence="9">
    <location>
        <position position="62"/>
    </location>
</feature>
<feature type="modified residue" description="Phenylalanine amide" evidence="9">
    <location>
        <position position="75"/>
    </location>
</feature>
<feature type="modified residue" description="Phenylalanine amide" evidence="9">
    <location>
        <position position="89"/>
    </location>
</feature>
<feature type="modified residue" description="Phenylalanine amide" evidence="9">
    <location>
        <position position="103"/>
    </location>
</feature>
<feature type="modified residue" description="Phenylalanine amide" evidence="9">
    <location>
        <position position="117"/>
    </location>
</feature>
<feature type="modified residue" description="Phenylalanine amide" evidence="9">
    <location>
        <position position="130"/>
    </location>
</feature>
<feature type="modified residue" description="Leucine amide" evidence="9">
    <location>
        <position position="143"/>
    </location>
</feature>
<feature type="modified residue" description="Phenylalanine amide" evidence="9">
    <location>
        <position position="157"/>
    </location>
</feature>